<evidence type="ECO:0000255" key="1">
    <source>
        <dbReference type="HAMAP-Rule" id="MF_01343"/>
    </source>
</evidence>
<evidence type="ECO:0000305" key="2"/>
<sequence length="89" mass="10182">MSLSTEKKAAIVAEFGRDAKDTGSSEVQIALLTAQINHLQAHFSTHKKDHHGRRGLLRMVSRRRKLLDYLKRTDLAKYSEIIARLGLRR</sequence>
<feature type="chain" id="PRO_1000054792" description="Small ribosomal subunit protein uS15">
    <location>
        <begin position="1"/>
        <end position="89"/>
    </location>
</feature>
<reference key="1">
    <citation type="journal article" date="2007" name="J. Bacteriol.">
        <title>Complete genome sequence of Haemophilus somnus (Histophilus somni) strain 129Pt and comparison to Haemophilus ducreyi 35000HP and Haemophilus influenzae Rd.</title>
        <authorList>
            <person name="Challacombe J.F."/>
            <person name="Duncan A.J."/>
            <person name="Brettin T.S."/>
            <person name="Bruce D."/>
            <person name="Chertkov O."/>
            <person name="Detter J.C."/>
            <person name="Han C.S."/>
            <person name="Misra M."/>
            <person name="Richardson P."/>
            <person name="Tapia R."/>
            <person name="Thayer N."/>
            <person name="Xie G."/>
            <person name="Inzana T.J."/>
        </authorList>
    </citation>
    <scope>NUCLEOTIDE SEQUENCE [LARGE SCALE GENOMIC DNA]</scope>
    <source>
        <strain>129Pt</strain>
    </source>
</reference>
<gene>
    <name evidence="1" type="primary">rpsO</name>
    <name type="ordered locus">HS_0477</name>
</gene>
<keyword id="KW-0687">Ribonucleoprotein</keyword>
<keyword id="KW-0689">Ribosomal protein</keyword>
<keyword id="KW-0694">RNA-binding</keyword>
<keyword id="KW-0699">rRNA-binding</keyword>
<organism>
    <name type="scientific">Histophilus somni (strain 129Pt)</name>
    <name type="common">Haemophilus somnus</name>
    <dbReference type="NCBI Taxonomy" id="205914"/>
    <lineage>
        <taxon>Bacteria</taxon>
        <taxon>Pseudomonadati</taxon>
        <taxon>Pseudomonadota</taxon>
        <taxon>Gammaproteobacteria</taxon>
        <taxon>Pasteurellales</taxon>
        <taxon>Pasteurellaceae</taxon>
        <taxon>Histophilus</taxon>
    </lineage>
</organism>
<protein>
    <recommendedName>
        <fullName evidence="1">Small ribosomal subunit protein uS15</fullName>
    </recommendedName>
    <alternativeName>
        <fullName evidence="2">30S ribosomal protein S15</fullName>
    </alternativeName>
</protein>
<name>RS15_HISS1</name>
<comment type="function">
    <text evidence="1">One of the primary rRNA binding proteins, it binds directly to 16S rRNA where it helps nucleate assembly of the platform of the 30S subunit by binding and bridging several RNA helices of the 16S rRNA.</text>
</comment>
<comment type="function">
    <text evidence="1">Forms an intersubunit bridge (bridge B4) with the 23S rRNA of the 50S subunit in the ribosome.</text>
</comment>
<comment type="subunit">
    <text evidence="1">Part of the 30S ribosomal subunit. Forms a bridge to the 50S subunit in the 70S ribosome, contacting the 23S rRNA.</text>
</comment>
<comment type="similarity">
    <text evidence="1">Belongs to the universal ribosomal protein uS15 family.</text>
</comment>
<proteinExistence type="inferred from homology"/>
<accession>Q0I275</accession>
<dbReference type="EMBL" id="CP000436">
    <property type="protein sequence ID" value="ABI24754.1"/>
    <property type="molecule type" value="Genomic_DNA"/>
</dbReference>
<dbReference type="SMR" id="Q0I275"/>
<dbReference type="KEGG" id="hso:HS_0477"/>
<dbReference type="eggNOG" id="COG0184">
    <property type="taxonomic scope" value="Bacteria"/>
</dbReference>
<dbReference type="HOGENOM" id="CLU_148518_0_0_6"/>
<dbReference type="GO" id="GO:0022627">
    <property type="term" value="C:cytosolic small ribosomal subunit"/>
    <property type="evidence" value="ECO:0007669"/>
    <property type="project" value="TreeGrafter"/>
</dbReference>
<dbReference type="GO" id="GO:0019843">
    <property type="term" value="F:rRNA binding"/>
    <property type="evidence" value="ECO:0007669"/>
    <property type="project" value="UniProtKB-UniRule"/>
</dbReference>
<dbReference type="GO" id="GO:0003735">
    <property type="term" value="F:structural constituent of ribosome"/>
    <property type="evidence" value="ECO:0007669"/>
    <property type="project" value="InterPro"/>
</dbReference>
<dbReference type="GO" id="GO:0006412">
    <property type="term" value="P:translation"/>
    <property type="evidence" value="ECO:0007669"/>
    <property type="project" value="UniProtKB-UniRule"/>
</dbReference>
<dbReference type="CDD" id="cd00353">
    <property type="entry name" value="Ribosomal_S15p_S13e"/>
    <property type="match status" value="1"/>
</dbReference>
<dbReference type="FunFam" id="1.10.287.10:FF:000002">
    <property type="entry name" value="30S ribosomal protein S15"/>
    <property type="match status" value="1"/>
</dbReference>
<dbReference type="Gene3D" id="6.10.250.3130">
    <property type="match status" value="1"/>
</dbReference>
<dbReference type="Gene3D" id="1.10.287.10">
    <property type="entry name" value="S15/NS1, RNA-binding"/>
    <property type="match status" value="1"/>
</dbReference>
<dbReference type="HAMAP" id="MF_01343_B">
    <property type="entry name" value="Ribosomal_uS15_B"/>
    <property type="match status" value="1"/>
</dbReference>
<dbReference type="InterPro" id="IPR000589">
    <property type="entry name" value="Ribosomal_uS15"/>
</dbReference>
<dbReference type="InterPro" id="IPR005290">
    <property type="entry name" value="Ribosomal_uS15_bac-type"/>
</dbReference>
<dbReference type="InterPro" id="IPR009068">
    <property type="entry name" value="uS15_NS1_RNA-bd_sf"/>
</dbReference>
<dbReference type="NCBIfam" id="TIGR00952">
    <property type="entry name" value="S15_bact"/>
    <property type="match status" value="1"/>
</dbReference>
<dbReference type="PANTHER" id="PTHR23321">
    <property type="entry name" value="RIBOSOMAL PROTEIN S15, BACTERIAL AND ORGANELLAR"/>
    <property type="match status" value="1"/>
</dbReference>
<dbReference type="PANTHER" id="PTHR23321:SF26">
    <property type="entry name" value="SMALL RIBOSOMAL SUBUNIT PROTEIN US15M"/>
    <property type="match status" value="1"/>
</dbReference>
<dbReference type="Pfam" id="PF00312">
    <property type="entry name" value="Ribosomal_S15"/>
    <property type="match status" value="1"/>
</dbReference>
<dbReference type="SMART" id="SM01387">
    <property type="entry name" value="Ribosomal_S15"/>
    <property type="match status" value="1"/>
</dbReference>
<dbReference type="SUPFAM" id="SSF47060">
    <property type="entry name" value="S15/NS1 RNA-binding domain"/>
    <property type="match status" value="1"/>
</dbReference>
<dbReference type="PROSITE" id="PS00362">
    <property type="entry name" value="RIBOSOMAL_S15"/>
    <property type="match status" value="1"/>
</dbReference>